<protein>
    <recommendedName>
        <fullName evidence="1">ATP synthase gamma chain</fullName>
    </recommendedName>
    <alternativeName>
        <fullName evidence="1">ATP synthase F1 sector gamma subunit</fullName>
    </alternativeName>
    <alternativeName>
        <fullName evidence="1">F-ATPase gamma subunit</fullName>
    </alternativeName>
</protein>
<dbReference type="EMBL" id="CP001097">
    <property type="protein sequence ID" value="ACD91354.1"/>
    <property type="molecule type" value="Genomic_DNA"/>
</dbReference>
<dbReference type="RefSeq" id="WP_012467219.1">
    <property type="nucleotide sequence ID" value="NC_010803.1"/>
</dbReference>
<dbReference type="SMR" id="B3EHU5"/>
<dbReference type="STRING" id="290315.Clim_2331"/>
<dbReference type="KEGG" id="cli:Clim_2331"/>
<dbReference type="eggNOG" id="COG0224">
    <property type="taxonomic scope" value="Bacteria"/>
</dbReference>
<dbReference type="HOGENOM" id="CLU_050669_0_1_10"/>
<dbReference type="OrthoDB" id="9812769at2"/>
<dbReference type="Proteomes" id="UP000008841">
    <property type="component" value="Chromosome"/>
</dbReference>
<dbReference type="GO" id="GO:0005886">
    <property type="term" value="C:plasma membrane"/>
    <property type="evidence" value="ECO:0007669"/>
    <property type="project" value="UniProtKB-SubCell"/>
</dbReference>
<dbReference type="GO" id="GO:0045259">
    <property type="term" value="C:proton-transporting ATP synthase complex"/>
    <property type="evidence" value="ECO:0007669"/>
    <property type="project" value="UniProtKB-KW"/>
</dbReference>
<dbReference type="GO" id="GO:0005524">
    <property type="term" value="F:ATP binding"/>
    <property type="evidence" value="ECO:0007669"/>
    <property type="project" value="UniProtKB-UniRule"/>
</dbReference>
<dbReference type="GO" id="GO:0046933">
    <property type="term" value="F:proton-transporting ATP synthase activity, rotational mechanism"/>
    <property type="evidence" value="ECO:0007669"/>
    <property type="project" value="UniProtKB-UniRule"/>
</dbReference>
<dbReference type="GO" id="GO:0042777">
    <property type="term" value="P:proton motive force-driven plasma membrane ATP synthesis"/>
    <property type="evidence" value="ECO:0007669"/>
    <property type="project" value="UniProtKB-UniRule"/>
</dbReference>
<dbReference type="CDD" id="cd12151">
    <property type="entry name" value="F1-ATPase_gamma"/>
    <property type="match status" value="1"/>
</dbReference>
<dbReference type="Gene3D" id="3.40.1380.10">
    <property type="match status" value="1"/>
</dbReference>
<dbReference type="Gene3D" id="1.10.287.80">
    <property type="entry name" value="ATP synthase, gamma subunit, helix hairpin domain"/>
    <property type="match status" value="2"/>
</dbReference>
<dbReference type="HAMAP" id="MF_00815">
    <property type="entry name" value="ATP_synth_gamma_bact"/>
    <property type="match status" value="1"/>
</dbReference>
<dbReference type="InterPro" id="IPR035968">
    <property type="entry name" value="ATP_synth_F1_ATPase_gsu"/>
</dbReference>
<dbReference type="InterPro" id="IPR000131">
    <property type="entry name" value="ATP_synth_F1_gsu"/>
</dbReference>
<dbReference type="InterPro" id="IPR023632">
    <property type="entry name" value="ATP_synth_F1_gsu_CS"/>
</dbReference>
<dbReference type="NCBIfam" id="TIGR01146">
    <property type="entry name" value="ATPsyn_F1gamma"/>
    <property type="match status" value="1"/>
</dbReference>
<dbReference type="NCBIfam" id="NF009958">
    <property type="entry name" value="PRK13425.1"/>
    <property type="match status" value="1"/>
</dbReference>
<dbReference type="PANTHER" id="PTHR11693">
    <property type="entry name" value="ATP SYNTHASE GAMMA CHAIN"/>
    <property type="match status" value="1"/>
</dbReference>
<dbReference type="PANTHER" id="PTHR11693:SF22">
    <property type="entry name" value="ATP SYNTHASE SUBUNIT GAMMA, MITOCHONDRIAL"/>
    <property type="match status" value="1"/>
</dbReference>
<dbReference type="Pfam" id="PF00231">
    <property type="entry name" value="ATP-synt"/>
    <property type="match status" value="1"/>
</dbReference>
<dbReference type="PRINTS" id="PR00126">
    <property type="entry name" value="ATPASEGAMMA"/>
</dbReference>
<dbReference type="SUPFAM" id="SSF52943">
    <property type="entry name" value="ATP synthase (F1-ATPase), gamma subunit"/>
    <property type="match status" value="1"/>
</dbReference>
<dbReference type="PROSITE" id="PS00153">
    <property type="entry name" value="ATPASE_GAMMA"/>
    <property type="match status" value="1"/>
</dbReference>
<feature type="chain" id="PRO_1000134122" description="ATP synthase gamma chain">
    <location>
        <begin position="1"/>
        <end position="291"/>
    </location>
</feature>
<reference key="1">
    <citation type="submission" date="2008-05" db="EMBL/GenBank/DDBJ databases">
        <title>Complete sequence of Chlorobium limicola DSM 245.</title>
        <authorList>
            <consortium name="US DOE Joint Genome Institute"/>
            <person name="Lucas S."/>
            <person name="Copeland A."/>
            <person name="Lapidus A."/>
            <person name="Glavina del Rio T."/>
            <person name="Dalin E."/>
            <person name="Tice H."/>
            <person name="Bruce D."/>
            <person name="Goodwin L."/>
            <person name="Pitluck S."/>
            <person name="Schmutz J."/>
            <person name="Larimer F."/>
            <person name="Land M."/>
            <person name="Hauser L."/>
            <person name="Kyrpides N."/>
            <person name="Ovchinnikova G."/>
            <person name="Zhao F."/>
            <person name="Li T."/>
            <person name="Liu Z."/>
            <person name="Overmann J."/>
            <person name="Bryant D.A."/>
            <person name="Richardson P."/>
        </authorList>
    </citation>
    <scope>NUCLEOTIDE SEQUENCE [LARGE SCALE GENOMIC DNA]</scope>
    <source>
        <strain>DSM 245 / NBRC 103803 / 6330</strain>
    </source>
</reference>
<proteinExistence type="inferred from homology"/>
<comment type="function">
    <text evidence="1">Produces ATP from ADP in the presence of a proton gradient across the membrane. The gamma chain is believed to be important in regulating ATPase activity and the flow of protons through the CF(0) complex.</text>
</comment>
<comment type="subunit">
    <text evidence="1">F-type ATPases have 2 components, CF(1) - the catalytic core - and CF(0) - the membrane proton channel. CF(1) has five subunits: alpha(3), beta(3), gamma(1), delta(1), epsilon(1). CF(0) has three main subunits: a, b and c.</text>
</comment>
<comment type="subcellular location">
    <subcellularLocation>
        <location evidence="1">Cell inner membrane</location>
        <topology evidence="1">Peripheral membrane protein</topology>
    </subcellularLocation>
</comment>
<comment type="similarity">
    <text evidence="1">Belongs to the ATPase gamma chain family.</text>
</comment>
<gene>
    <name evidence="1" type="primary">atpG</name>
    <name type="ordered locus">Clim_2331</name>
</gene>
<name>ATPG_CHLL2</name>
<organism>
    <name type="scientific">Chlorobium limicola (strain DSM 245 / NBRC 103803 / 6330)</name>
    <dbReference type="NCBI Taxonomy" id="290315"/>
    <lineage>
        <taxon>Bacteria</taxon>
        <taxon>Pseudomonadati</taxon>
        <taxon>Chlorobiota</taxon>
        <taxon>Chlorobiia</taxon>
        <taxon>Chlorobiales</taxon>
        <taxon>Chlorobiaceae</taxon>
        <taxon>Chlorobium/Pelodictyon group</taxon>
        <taxon>Chlorobium</taxon>
    </lineage>
</organism>
<accession>B3EHU5</accession>
<keyword id="KW-0066">ATP synthesis</keyword>
<keyword id="KW-0997">Cell inner membrane</keyword>
<keyword id="KW-1003">Cell membrane</keyword>
<keyword id="KW-0139">CF(1)</keyword>
<keyword id="KW-0375">Hydrogen ion transport</keyword>
<keyword id="KW-0406">Ion transport</keyword>
<keyword id="KW-0472">Membrane</keyword>
<keyword id="KW-0813">Transport</keyword>
<sequence>MPTLKDIRVRIKGIKSTQQVTKAMKMVAAAKLRRAQERAIMARPYAGKLKEMLGSLSAKVDTSLNPLLSSRQDVKKVLVILIAADRGLCGAFNTNIIKLAQKVVTEDYAAQYKNGGVSMICAGSRGFDFFRKRGFSIVKGYPSVFQNLDFSVAKEIAETASGMYLRGEADKVIVVYNEFKSVLAPVLKAEDLLPIAAENAGKDNSGDYIYEPSPAVIIDELVPKHLSTQVWRMMLESNAAEQAARMTAMDSATENAKELLRTLNISYNRARQAAITKELSEIVAGADALKN</sequence>
<evidence type="ECO:0000255" key="1">
    <source>
        <dbReference type="HAMAP-Rule" id="MF_00815"/>
    </source>
</evidence>